<keyword id="KW-0975">Bacterial flagellum</keyword>
<keyword id="KW-1185">Reference proteome</keyword>
<name>FLIE_ECOL6</name>
<accession>Q8FGL1</accession>
<comment type="subcellular location">
    <subcellularLocation>
        <location evidence="2">Bacterial flagellum basal body</location>
    </subcellularLocation>
</comment>
<comment type="similarity">
    <text evidence="2">Belongs to the FliE family.</text>
</comment>
<comment type="sequence caution" evidence="3">
    <conflict type="erroneous initiation">
        <sequence resource="EMBL-CDS" id="AAN80812"/>
    </conflict>
</comment>
<reference key="1">
    <citation type="journal article" date="2002" name="Proc. Natl. Acad. Sci. U.S.A.">
        <title>Extensive mosaic structure revealed by the complete genome sequence of uropathogenic Escherichia coli.</title>
        <authorList>
            <person name="Welch R.A."/>
            <person name="Burland V."/>
            <person name="Plunkett G. III"/>
            <person name="Redford P."/>
            <person name="Roesch P."/>
            <person name="Rasko D."/>
            <person name="Buckles E.L."/>
            <person name="Liou S.-R."/>
            <person name="Boutin A."/>
            <person name="Hackett J."/>
            <person name="Stroud D."/>
            <person name="Mayhew G.F."/>
            <person name="Rose D.J."/>
            <person name="Zhou S."/>
            <person name="Schwartz D.C."/>
            <person name="Perna N.T."/>
            <person name="Mobley H.L.T."/>
            <person name="Donnenberg M.S."/>
            <person name="Blattner F.R."/>
        </authorList>
    </citation>
    <scope>NUCLEOTIDE SEQUENCE [LARGE SCALE GENOMIC DNA]</scope>
    <source>
        <strain>CFT073 / ATCC 700928 / UPEC</strain>
    </source>
</reference>
<protein>
    <recommendedName>
        <fullName evidence="2">Flagellar hook-basal body complex protein FliE</fullName>
    </recommendedName>
</protein>
<feature type="initiator methionine" description="Removed" evidence="1">
    <location>
        <position position="1"/>
    </location>
</feature>
<feature type="chain" id="PRO_0000105544" description="Flagellar hook-basal body complex protein FliE">
    <location>
        <begin position="2"/>
        <end position="104"/>
    </location>
</feature>
<proteinExistence type="inferred from homology"/>
<organism>
    <name type="scientific">Escherichia coli O6:H1 (strain CFT073 / ATCC 700928 / UPEC)</name>
    <dbReference type="NCBI Taxonomy" id="199310"/>
    <lineage>
        <taxon>Bacteria</taxon>
        <taxon>Pseudomonadati</taxon>
        <taxon>Pseudomonadota</taxon>
        <taxon>Gammaproteobacteria</taxon>
        <taxon>Enterobacterales</taxon>
        <taxon>Enterobacteriaceae</taxon>
        <taxon>Escherichia</taxon>
    </lineage>
</organism>
<evidence type="ECO:0000250" key="1"/>
<evidence type="ECO:0000255" key="2">
    <source>
        <dbReference type="HAMAP-Rule" id="MF_00724"/>
    </source>
</evidence>
<evidence type="ECO:0000305" key="3"/>
<dbReference type="EMBL" id="AE014075">
    <property type="protein sequence ID" value="AAN80812.1"/>
    <property type="status" value="ALT_INIT"/>
    <property type="molecule type" value="Genomic_DNA"/>
</dbReference>
<dbReference type="RefSeq" id="WP_001274301.1">
    <property type="nucleotide sequence ID" value="NZ_CP051263.1"/>
</dbReference>
<dbReference type="SMR" id="Q8FGL1"/>
<dbReference type="STRING" id="199310.c2353"/>
<dbReference type="DNASU" id="1037015"/>
<dbReference type="KEGG" id="ecc:c2353"/>
<dbReference type="eggNOG" id="COG1677">
    <property type="taxonomic scope" value="Bacteria"/>
</dbReference>
<dbReference type="HOGENOM" id="CLU_147249_0_2_6"/>
<dbReference type="Proteomes" id="UP000001410">
    <property type="component" value="Chromosome"/>
</dbReference>
<dbReference type="GO" id="GO:0009425">
    <property type="term" value="C:bacterial-type flagellum basal body"/>
    <property type="evidence" value="ECO:0007669"/>
    <property type="project" value="UniProtKB-SubCell"/>
</dbReference>
<dbReference type="GO" id="GO:0003774">
    <property type="term" value="F:cytoskeletal motor activity"/>
    <property type="evidence" value="ECO:0007669"/>
    <property type="project" value="InterPro"/>
</dbReference>
<dbReference type="GO" id="GO:0005198">
    <property type="term" value="F:structural molecule activity"/>
    <property type="evidence" value="ECO:0007669"/>
    <property type="project" value="InterPro"/>
</dbReference>
<dbReference type="GO" id="GO:0071973">
    <property type="term" value="P:bacterial-type flagellum-dependent cell motility"/>
    <property type="evidence" value="ECO:0007669"/>
    <property type="project" value="InterPro"/>
</dbReference>
<dbReference type="HAMAP" id="MF_00724">
    <property type="entry name" value="FliE"/>
    <property type="match status" value="1"/>
</dbReference>
<dbReference type="InterPro" id="IPR001624">
    <property type="entry name" value="FliE"/>
</dbReference>
<dbReference type="NCBIfam" id="TIGR00205">
    <property type="entry name" value="fliE"/>
    <property type="match status" value="1"/>
</dbReference>
<dbReference type="PANTHER" id="PTHR34653">
    <property type="match status" value="1"/>
</dbReference>
<dbReference type="PANTHER" id="PTHR34653:SF1">
    <property type="entry name" value="FLAGELLAR HOOK-BASAL BODY COMPLEX PROTEIN FLIE"/>
    <property type="match status" value="1"/>
</dbReference>
<dbReference type="Pfam" id="PF02049">
    <property type="entry name" value="FliE"/>
    <property type="match status" value="1"/>
</dbReference>
<dbReference type="PRINTS" id="PR01006">
    <property type="entry name" value="FLGHOOKFLIE"/>
</dbReference>
<gene>
    <name evidence="2" type="primary">fliE</name>
    <name type="ordered locus">c2353</name>
</gene>
<sequence length="104" mass="11155">MSAIQGIEGVISQLQATAMSARAQESLPQPTISFAGQLHAALDRISDTQTVARTQAEKFTLGEPGVALNDVMTDMQKASVSMQMGIQVRNKLVAAYQEVMSMQV</sequence>